<accession>C4XSQ4</accession>
<feature type="chain" id="PRO_1000205993" description="Gamma-glutamyl phosphate reductase">
    <location>
        <begin position="1"/>
        <end position="419"/>
    </location>
</feature>
<dbReference type="EC" id="1.2.1.41" evidence="1"/>
<dbReference type="EMBL" id="AP010904">
    <property type="protein sequence ID" value="BAH75746.1"/>
    <property type="molecule type" value="Genomic_DNA"/>
</dbReference>
<dbReference type="SMR" id="C4XSQ4"/>
<dbReference type="STRING" id="573370.DMR_22550"/>
<dbReference type="KEGG" id="dma:DMR_22550"/>
<dbReference type="eggNOG" id="COG0014">
    <property type="taxonomic scope" value="Bacteria"/>
</dbReference>
<dbReference type="HOGENOM" id="CLU_030231_0_0_7"/>
<dbReference type="OrthoDB" id="9809970at2"/>
<dbReference type="UniPathway" id="UPA00098">
    <property type="reaction ID" value="UER00360"/>
</dbReference>
<dbReference type="Proteomes" id="UP000009071">
    <property type="component" value="Chromosome"/>
</dbReference>
<dbReference type="GO" id="GO:0005737">
    <property type="term" value="C:cytoplasm"/>
    <property type="evidence" value="ECO:0007669"/>
    <property type="project" value="UniProtKB-SubCell"/>
</dbReference>
<dbReference type="GO" id="GO:0004350">
    <property type="term" value="F:glutamate-5-semialdehyde dehydrogenase activity"/>
    <property type="evidence" value="ECO:0007669"/>
    <property type="project" value="UniProtKB-UniRule"/>
</dbReference>
<dbReference type="GO" id="GO:0050661">
    <property type="term" value="F:NADP binding"/>
    <property type="evidence" value="ECO:0007669"/>
    <property type="project" value="InterPro"/>
</dbReference>
<dbReference type="GO" id="GO:0055129">
    <property type="term" value="P:L-proline biosynthetic process"/>
    <property type="evidence" value="ECO:0007669"/>
    <property type="project" value="UniProtKB-UniRule"/>
</dbReference>
<dbReference type="CDD" id="cd07079">
    <property type="entry name" value="ALDH_F18-19_ProA-GPR"/>
    <property type="match status" value="1"/>
</dbReference>
<dbReference type="FunFam" id="3.40.309.10:FF:000006">
    <property type="entry name" value="Gamma-glutamyl phosphate reductase"/>
    <property type="match status" value="1"/>
</dbReference>
<dbReference type="Gene3D" id="3.40.605.10">
    <property type="entry name" value="Aldehyde Dehydrogenase, Chain A, domain 1"/>
    <property type="match status" value="1"/>
</dbReference>
<dbReference type="Gene3D" id="3.40.309.10">
    <property type="entry name" value="Aldehyde Dehydrogenase, Chain A, domain 2"/>
    <property type="match status" value="1"/>
</dbReference>
<dbReference type="HAMAP" id="MF_00412">
    <property type="entry name" value="ProA"/>
    <property type="match status" value="1"/>
</dbReference>
<dbReference type="InterPro" id="IPR016161">
    <property type="entry name" value="Ald_DH/histidinol_DH"/>
</dbReference>
<dbReference type="InterPro" id="IPR016163">
    <property type="entry name" value="Ald_DH_C"/>
</dbReference>
<dbReference type="InterPro" id="IPR016162">
    <property type="entry name" value="Ald_DH_N"/>
</dbReference>
<dbReference type="InterPro" id="IPR015590">
    <property type="entry name" value="Aldehyde_DH_dom"/>
</dbReference>
<dbReference type="InterPro" id="IPR020593">
    <property type="entry name" value="G-glutamylP_reductase_CS"/>
</dbReference>
<dbReference type="InterPro" id="IPR012134">
    <property type="entry name" value="Glu-5-SA_DH"/>
</dbReference>
<dbReference type="InterPro" id="IPR000965">
    <property type="entry name" value="GPR_dom"/>
</dbReference>
<dbReference type="NCBIfam" id="NF001221">
    <property type="entry name" value="PRK00197.1"/>
    <property type="match status" value="1"/>
</dbReference>
<dbReference type="NCBIfam" id="TIGR00407">
    <property type="entry name" value="proA"/>
    <property type="match status" value="1"/>
</dbReference>
<dbReference type="PANTHER" id="PTHR11063:SF8">
    <property type="entry name" value="DELTA-1-PYRROLINE-5-CARBOXYLATE SYNTHASE"/>
    <property type="match status" value="1"/>
</dbReference>
<dbReference type="PANTHER" id="PTHR11063">
    <property type="entry name" value="GLUTAMATE SEMIALDEHYDE DEHYDROGENASE"/>
    <property type="match status" value="1"/>
</dbReference>
<dbReference type="Pfam" id="PF00171">
    <property type="entry name" value="Aldedh"/>
    <property type="match status" value="1"/>
</dbReference>
<dbReference type="PIRSF" id="PIRSF000151">
    <property type="entry name" value="GPR"/>
    <property type="match status" value="1"/>
</dbReference>
<dbReference type="SUPFAM" id="SSF53720">
    <property type="entry name" value="ALDH-like"/>
    <property type="match status" value="1"/>
</dbReference>
<dbReference type="PROSITE" id="PS01223">
    <property type="entry name" value="PROA"/>
    <property type="match status" value="1"/>
</dbReference>
<organism>
    <name type="scientific">Solidesulfovibrio magneticus (strain ATCC 700980 / DSM 13731 / RS-1)</name>
    <name type="common">Desulfovibrio magneticus</name>
    <dbReference type="NCBI Taxonomy" id="573370"/>
    <lineage>
        <taxon>Bacteria</taxon>
        <taxon>Pseudomonadati</taxon>
        <taxon>Thermodesulfobacteriota</taxon>
        <taxon>Desulfovibrionia</taxon>
        <taxon>Desulfovibrionales</taxon>
        <taxon>Desulfovibrionaceae</taxon>
        <taxon>Solidesulfovibrio</taxon>
    </lineage>
</organism>
<keyword id="KW-0028">Amino-acid biosynthesis</keyword>
<keyword id="KW-0963">Cytoplasm</keyword>
<keyword id="KW-0521">NADP</keyword>
<keyword id="KW-0560">Oxidoreductase</keyword>
<keyword id="KW-0641">Proline biosynthesis</keyword>
<comment type="function">
    <text evidence="1">Catalyzes the NADPH-dependent reduction of L-glutamate 5-phosphate into L-glutamate 5-semialdehyde and phosphate. The product spontaneously undergoes cyclization to form 1-pyrroline-5-carboxylate.</text>
</comment>
<comment type="catalytic activity">
    <reaction evidence="1">
        <text>L-glutamate 5-semialdehyde + phosphate + NADP(+) = L-glutamyl 5-phosphate + NADPH + H(+)</text>
        <dbReference type="Rhea" id="RHEA:19541"/>
        <dbReference type="ChEBI" id="CHEBI:15378"/>
        <dbReference type="ChEBI" id="CHEBI:43474"/>
        <dbReference type="ChEBI" id="CHEBI:57783"/>
        <dbReference type="ChEBI" id="CHEBI:58066"/>
        <dbReference type="ChEBI" id="CHEBI:58274"/>
        <dbReference type="ChEBI" id="CHEBI:58349"/>
        <dbReference type="EC" id="1.2.1.41"/>
    </reaction>
</comment>
<comment type="pathway">
    <text evidence="1">Amino-acid biosynthesis; L-proline biosynthesis; L-glutamate 5-semialdehyde from L-glutamate: step 2/2.</text>
</comment>
<comment type="subcellular location">
    <subcellularLocation>
        <location evidence="1">Cytoplasm</location>
    </subcellularLocation>
</comment>
<comment type="similarity">
    <text evidence="1">Belongs to the gamma-glutamyl phosphate reductase family.</text>
</comment>
<evidence type="ECO:0000255" key="1">
    <source>
        <dbReference type="HAMAP-Rule" id="MF_00412"/>
    </source>
</evidence>
<reference key="1">
    <citation type="journal article" date="2009" name="Genome Res.">
        <title>Whole genome sequence of Desulfovibrio magneticus strain RS-1 revealed common gene clusters in magnetotactic bacteria.</title>
        <authorList>
            <person name="Nakazawa H."/>
            <person name="Arakaki A."/>
            <person name="Narita-Yamada S."/>
            <person name="Yashiro I."/>
            <person name="Jinno K."/>
            <person name="Aoki N."/>
            <person name="Tsuruyama A."/>
            <person name="Okamura Y."/>
            <person name="Tanikawa S."/>
            <person name="Fujita N."/>
            <person name="Takeyama H."/>
            <person name="Matsunaga T."/>
        </authorList>
    </citation>
    <scope>NUCLEOTIDE SEQUENCE [LARGE SCALE GENOMIC DNA]</scope>
    <source>
        <strain>ATCC 700980 / DSM 13731 / RS-1</strain>
    </source>
</reference>
<sequence length="419" mass="43796">MSVAADMEVMARKAKEASRAMAAASGAAKDAFLAGLAGLLETRREGVLAANAADLEKARAAGMDAPRLDRLTLTPAVMDGMAKACREIIALPDPVGAIESMRPRPNGLLVGCMRVPLGVICMIYESRPNVTIDAAILCLKAGNAVILKGGSEALASNLALAGLLREALEASGLPADAAQLVPTADRAAVAALCKLDELIDVMIPRGGEGLIRAVVSQATMPVLKHYKGVCHAYIDSGADEARAETIVVNAKAQRPGVCNALECLLVHVDAAPTFLPRIGDALRRVGVTMRACPRSLPLLGEGAVAAMPEDFGHEFHDLILAVKVVDSLDEALTHIHRHGSGHTEVICTENHDRAMDFLRRADASMVGVNCSTRFNDGGELGLGAEIGISTSKLHSYGPMGLVELTSAKFVVLGQGQVRG</sequence>
<proteinExistence type="inferred from homology"/>
<protein>
    <recommendedName>
        <fullName evidence="1">Gamma-glutamyl phosphate reductase</fullName>
        <shortName evidence="1">GPR</shortName>
        <ecNumber evidence="1">1.2.1.41</ecNumber>
    </recommendedName>
    <alternativeName>
        <fullName evidence="1">Glutamate-5-semialdehyde dehydrogenase</fullName>
    </alternativeName>
    <alternativeName>
        <fullName evidence="1">Glutamyl-gamma-semialdehyde dehydrogenase</fullName>
        <shortName evidence="1">GSA dehydrogenase</shortName>
    </alternativeName>
</protein>
<name>PROA_SOLM1</name>
<gene>
    <name evidence="1" type="primary">proA</name>
    <name type="ordered locus">DMR_22550</name>
</gene>